<comment type="function">
    <text evidence="5 6">Axonemal protein which is implicated in axonemal and/or peri-axonemal structure assembly and regulates flagellum assembly and beating and therefore sperm motility.</text>
</comment>
<comment type="subcellular location">
    <subcellularLocation>
        <location evidence="5 6">Cytoplasm</location>
        <location evidence="5 6">Cytoskeleton</location>
        <location evidence="5 6">Flagellum axoneme</location>
    </subcellularLocation>
</comment>
<comment type="alternative products">
    <event type="alternative splicing"/>
    <isoform>
        <id>Q80VM3-1</id>
        <name>1</name>
        <sequence type="displayed"/>
    </isoform>
    <isoform>
        <id>Q80VM3-2</id>
        <name>2</name>
        <sequence type="described" ref="VSP_026639"/>
    </isoform>
</comment>
<comment type="tissue specificity">
    <text evidence="5 6">Expressed in spermatozoa (at protein level).</text>
</comment>
<comment type="domain">
    <text evidence="1">The TPR repeats are required for axonemal localization and flagellar beating.</text>
</comment>
<comment type="disruption phenotype">
    <text evidence="5 6">Knockout mice generated by CRISPR-Cas9-mediated gene editing display minor morphologic and ultrastructural defects of sperm flagella, which result in profound alterations in sperm flagellar velocity and beating frequency that strongly impair fertilization.</text>
</comment>
<dbReference type="EMBL" id="AK006580">
    <property type="protein sequence ID" value="BAC25147.1"/>
    <property type="molecule type" value="mRNA"/>
</dbReference>
<dbReference type="EMBL" id="BC048386">
    <property type="protein sequence ID" value="AAH48386.1"/>
    <property type="molecule type" value="mRNA"/>
</dbReference>
<dbReference type="CCDS" id="CCDS22428.1">
    <molecule id="Q80VM3-1"/>
</dbReference>
<dbReference type="SMR" id="Q80VM3"/>
<dbReference type="FunCoup" id="Q80VM3">
    <property type="interactions" value="20"/>
</dbReference>
<dbReference type="STRING" id="10090.ENSMUSP00000041919"/>
<dbReference type="iPTMnet" id="Q80VM3"/>
<dbReference type="PhosphoSitePlus" id="Q80VM3"/>
<dbReference type="jPOST" id="Q80VM3"/>
<dbReference type="PaxDb" id="10090-ENSMUSP00000041919"/>
<dbReference type="ProteomicsDB" id="297747">
    <molecule id="Q80VM3-1"/>
</dbReference>
<dbReference type="Antibodypedia" id="49071">
    <property type="antibodies" value="23 antibodies from 12 providers"/>
</dbReference>
<dbReference type="Ensembl" id="ENSMUST00000117845.8">
    <molecule id="Q80VM3-2"/>
    <property type="protein sequence ID" value="ENSMUSP00000112445.2"/>
    <property type="gene ID" value="ENSMUSG00000037101.17"/>
</dbReference>
<dbReference type="AGR" id="MGI:1920551"/>
<dbReference type="MGI" id="MGI:1920551">
    <property type="gene designation" value="Ttc29"/>
</dbReference>
<dbReference type="VEuPathDB" id="HostDB:ENSMUSG00000037101"/>
<dbReference type="eggNOG" id="ENOG502QQ2U">
    <property type="taxonomic scope" value="Eukaryota"/>
</dbReference>
<dbReference type="GeneTree" id="ENSGT00390000008611"/>
<dbReference type="HOGENOM" id="CLU_2984286_0_0_1"/>
<dbReference type="InParanoid" id="Q80VM3"/>
<dbReference type="OMA" id="QLAWMSG"/>
<dbReference type="PhylomeDB" id="Q80VM3"/>
<dbReference type="PRO" id="PR:Q80VM3"/>
<dbReference type="Proteomes" id="UP000000589">
    <property type="component" value="Chromosome 8"/>
</dbReference>
<dbReference type="RNAct" id="Q80VM3">
    <property type="molecule type" value="protein"/>
</dbReference>
<dbReference type="Bgee" id="ENSMUSG00000037101">
    <property type="expression patterns" value="Expressed in seminiferous tubule of testis and 35 other cell types or tissues"/>
</dbReference>
<dbReference type="ExpressionAtlas" id="Q80VM3">
    <property type="expression patterns" value="baseline and differential"/>
</dbReference>
<dbReference type="GO" id="GO:0005737">
    <property type="term" value="C:cytoplasm"/>
    <property type="evidence" value="ECO:0007669"/>
    <property type="project" value="UniProtKB-KW"/>
</dbReference>
<dbReference type="GO" id="GO:0005856">
    <property type="term" value="C:cytoskeleton"/>
    <property type="evidence" value="ECO:0007669"/>
    <property type="project" value="UniProtKB-KW"/>
</dbReference>
<dbReference type="GO" id="GO:0036126">
    <property type="term" value="C:sperm flagellum"/>
    <property type="evidence" value="ECO:0000314"/>
    <property type="project" value="UniProtKB"/>
</dbReference>
<dbReference type="GO" id="GO:0003341">
    <property type="term" value="P:cilium movement"/>
    <property type="evidence" value="ECO:0000315"/>
    <property type="project" value="UniProtKB"/>
</dbReference>
<dbReference type="Gene3D" id="1.25.40.10">
    <property type="entry name" value="Tetratricopeptide repeat domain"/>
    <property type="match status" value="2"/>
</dbReference>
<dbReference type="InterPro" id="IPR051476">
    <property type="entry name" value="Bac_ResReg_Asp_Phosphatase"/>
</dbReference>
<dbReference type="InterPro" id="IPR011990">
    <property type="entry name" value="TPR-like_helical_dom_sf"/>
</dbReference>
<dbReference type="InterPro" id="IPR019734">
    <property type="entry name" value="TPR_rpt"/>
</dbReference>
<dbReference type="PANTHER" id="PTHR46630">
    <property type="entry name" value="TETRATRICOPEPTIDE REPEAT PROTEIN 29"/>
    <property type="match status" value="1"/>
</dbReference>
<dbReference type="PANTHER" id="PTHR46630:SF1">
    <property type="entry name" value="TETRATRICOPEPTIDE REPEAT PROTEIN 29"/>
    <property type="match status" value="1"/>
</dbReference>
<dbReference type="Pfam" id="PF13424">
    <property type="entry name" value="TPR_12"/>
    <property type="match status" value="1"/>
</dbReference>
<dbReference type="Pfam" id="PF13181">
    <property type="entry name" value="TPR_8"/>
    <property type="match status" value="1"/>
</dbReference>
<dbReference type="SMART" id="SM00028">
    <property type="entry name" value="TPR"/>
    <property type="match status" value="4"/>
</dbReference>
<dbReference type="SUPFAM" id="SSF48452">
    <property type="entry name" value="TPR-like"/>
    <property type="match status" value="1"/>
</dbReference>
<dbReference type="PROSITE" id="PS50005">
    <property type="entry name" value="TPR"/>
    <property type="match status" value="5"/>
</dbReference>
<dbReference type="PROSITE" id="PS50293">
    <property type="entry name" value="TPR_REGION"/>
    <property type="match status" value="2"/>
</dbReference>
<reference key="1">
    <citation type="journal article" date="2005" name="Science">
        <title>The transcriptional landscape of the mammalian genome.</title>
        <authorList>
            <person name="Carninci P."/>
            <person name="Kasukawa T."/>
            <person name="Katayama S."/>
            <person name="Gough J."/>
            <person name="Frith M.C."/>
            <person name="Maeda N."/>
            <person name="Oyama R."/>
            <person name="Ravasi T."/>
            <person name="Lenhard B."/>
            <person name="Wells C."/>
            <person name="Kodzius R."/>
            <person name="Shimokawa K."/>
            <person name="Bajic V.B."/>
            <person name="Brenner S.E."/>
            <person name="Batalov S."/>
            <person name="Forrest A.R."/>
            <person name="Zavolan M."/>
            <person name="Davis M.J."/>
            <person name="Wilming L.G."/>
            <person name="Aidinis V."/>
            <person name="Allen J.E."/>
            <person name="Ambesi-Impiombato A."/>
            <person name="Apweiler R."/>
            <person name="Aturaliya R.N."/>
            <person name="Bailey T.L."/>
            <person name="Bansal M."/>
            <person name="Baxter L."/>
            <person name="Beisel K.W."/>
            <person name="Bersano T."/>
            <person name="Bono H."/>
            <person name="Chalk A.M."/>
            <person name="Chiu K.P."/>
            <person name="Choudhary V."/>
            <person name="Christoffels A."/>
            <person name="Clutterbuck D.R."/>
            <person name="Crowe M.L."/>
            <person name="Dalla E."/>
            <person name="Dalrymple B.P."/>
            <person name="de Bono B."/>
            <person name="Della Gatta G."/>
            <person name="di Bernardo D."/>
            <person name="Down T."/>
            <person name="Engstrom P."/>
            <person name="Fagiolini M."/>
            <person name="Faulkner G."/>
            <person name="Fletcher C.F."/>
            <person name="Fukushima T."/>
            <person name="Furuno M."/>
            <person name="Futaki S."/>
            <person name="Gariboldi M."/>
            <person name="Georgii-Hemming P."/>
            <person name="Gingeras T.R."/>
            <person name="Gojobori T."/>
            <person name="Green R.E."/>
            <person name="Gustincich S."/>
            <person name="Harbers M."/>
            <person name="Hayashi Y."/>
            <person name="Hensch T.K."/>
            <person name="Hirokawa N."/>
            <person name="Hill D."/>
            <person name="Huminiecki L."/>
            <person name="Iacono M."/>
            <person name="Ikeo K."/>
            <person name="Iwama A."/>
            <person name="Ishikawa T."/>
            <person name="Jakt M."/>
            <person name="Kanapin A."/>
            <person name="Katoh M."/>
            <person name="Kawasawa Y."/>
            <person name="Kelso J."/>
            <person name="Kitamura H."/>
            <person name="Kitano H."/>
            <person name="Kollias G."/>
            <person name="Krishnan S.P."/>
            <person name="Kruger A."/>
            <person name="Kummerfeld S.K."/>
            <person name="Kurochkin I.V."/>
            <person name="Lareau L.F."/>
            <person name="Lazarevic D."/>
            <person name="Lipovich L."/>
            <person name="Liu J."/>
            <person name="Liuni S."/>
            <person name="McWilliam S."/>
            <person name="Madan Babu M."/>
            <person name="Madera M."/>
            <person name="Marchionni L."/>
            <person name="Matsuda H."/>
            <person name="Matsuzawa S."/>
            <person name="Miki H."/>
            <person name="Mignone F."/>
            <person name="Miyake S."/>
            <person name="Morris K."/>
            <person name="Mottagui-Tabar S."/>
            <person name="Mulder N."/>
            <person name="Nakano N."/>
            <person name="Nakauchi H."/>
            <person name="Ng P."/>
            <person name="Nilsson R."/>
            <person name="Nishiguchi S."/>
            <person name="Nishikawa S."/>
            <person name="Nori F."/>
            <person name="Ohara O."/>
            <person name="Okazaki Y."/>
            <person name="Orlando V."/>
            <person name="Pang K.C."/>
            <person name="Pavan W.J."/>
            <person name="Pavesi G."/>
            <person name="Pesole G."/>
            <person name="Petrovsky N."/>
            <person name="Piazza S."/>
            <person name="Reed J."/>
            <person name="Reid J.F."/>
            <person name="Ring B.Z."/>
            <person name="Ringwald M."/>
            <person name="Rost B."/>
            <person name="Ruan Y."/>
            <person name="Salzberg S.L."/>
            <person name="Sandelin A."/>
            <person name="Schneider C."/>
            <person name="Schoenbach C."/>
            <person name="Sekiguchi K."/>
            <person name="Semple C.A."/>
            <person name="Seno S."/>
            <person name="Sessa L."/>
            <person name="Sheng Y."/>
            <person name="Shibata Y."/>
            <person name="Shimada H."/>
            <person name="Shimada K."/>
            <person name="Silva D."/>
            <person name="Sinclair B."/>
            <person name="Sperling S."/>
            <person name="Stupka E."/>
            <person name="Sugiura K."/>
            <person name="Sultana R."/>
            <person name="Takenaka Y."/>
            <person name="Taki K."/>
            <person name="Tammoja K."/>
            <person name="Tan S.L."/>
            <person name="Tang S."/>
            <person name="Taylor M.S."/>
            <person name="Tegner J."/>
            <person name="Teichmann S.A."/>
            <person name="Ueda H.R."/>
            <person name="van Nimwegen E."/>
            <person name="Verardo R."/>
            <person name="Wei C.L."/>
            <person name="Yagi K."/>
            <person name="Yamanishi H."/>
            <person name="Zabarovsky E."/>
            <person name="Zhu S."/>
            <person name="Zimmer A."/>
            <person name="Hide W."/>
            <person name="Bult C."/>
            <person name="Grimmond S.M."/>
            <person name="Teasdale R.D."/>
            <person name="Liu E.T."/>
            <person name="Brusic V."/>
            <person name="Quackenbush J."/>
            <person name="Wahlestedt C."/>
            <person name="Mattick J.S."/>
            <person name="Hume D.A."/>
            <person name="Kai C."/>
            <person name="Sasaki D."/>
            <person name="Tomaru Y."/>
            <person name="Fukuda S."/>
            <person name="Kanamori-Katayama M."/>
            <person name="Suzuki M."/>
            <person name="Aoki J."/>
            <person name="Arakawa T."/>
            <person name="Iida J."/>
            <person name="Imamura K."/>
            <person name="Itoh M."/>
            <person name="Kato T."/>
            <person name="Kawaji H."/>
            <person name="Kawagashira N."/>
            <person name="Kawashima T."/>
            <person name="Kojima M."/>
            <person name="Kondo S."/>
            <person name="Konno H."/>
            <person name="Nakano K."/>
            <person name="Ninomiya N."/>
            <person name="Nishio T."/>
            <person name="Okada M."/>
            <person name="Plessy C."/>
            <person name="Shibata K."/>
            <person name="Shiraki T."/>
            <person name="Suzuki S."/>
            <person name="Tagami M."/>
            <person name="Waki K."/>
            <person name="Watahiki A."/>
            <person name="Okamura-Oho Y."/>
            <person name="Suzuki H."/>
            <person name="Kawai J."/>
            <person name="Hayashizaki Y."/>
        </authorList>
    </citation>
    <scope>NUCLEOTIDE SEQUENCE [LARGE SCALE MRNA] (ISOFORM 2)</scope>
    <source>
        <strain>C57BL/6J</strain>
        <tissue>Testis</tissue>
    </source>
</reference>
<reference key="2">
    <citation type="journal article" date="2004" name="Genome Res.">
        <title>The status, quality, and expansion of the NIH full-length cDNA project: the Mammalian Gene Collection (MGC).</title>
        <authorList>
            <consortium name="The MGC Project Team"/>
        </authorList>
    </citation>
    <scope>NUCLEOTIDE SEQUENCE [LARGE SCALE MRNA] (ISOFORM 1)</scope>
    <source>
        <tissue>Olfactory epithelium</tissue>
    </source>
</reference>
<reference key="3">
    <citation type="journal article" date="2019" name="Am. J. Hum. Genet.">
        <title>Mutations in TTC29, Encoding an Evolutionarily Conserved Axonemal Protein, Result in Asthenozoospermia and Male Infertility.</title>
        <authorList>
            <person name="Lores P."/>
            <person name="Dacheux D."/>
            <person name="Kherraf Z.E."/>
            <person name="Nsota Mbango J.F."/>
            <person name="Coutton C."/>
            <person name="Stouvenel L."/>
            <person name="Ialy-Radio C."/>
            <person name="Amiri-Yekta A."/>
            <person name="Whitfield M."/>
            <person name="Schmitt A."/>
            <person name="Cazin C."/>
            <person name="Givelet M."/>
            <person name="Ferreux L."/>
            <person name="Fourati Ben Mustapha S."/>
            <person name="Halouani L."/>
            <person name="Marrakchi O."/>
            <person name="Daneshipour A."/>
            <person name="El Khouri E."/>
            <person name="Do Cruzeiro M."/>
            <person name="Favier M."/>
            <person name="Guillonneau F."/>
            <person name="Chaudhry M."/>
            <person name="Sakheli Z."/>
            <person name="Wolf J.P."/>
            <person name="Patrat C."/>
            <person name="Gacon G."/>
            <person name="Savinov S.N."/>
            <person name="Hosseini S.H."/>
            <person name="Robinson D.R."/>
            <person name="Zouari R."/>
            <person name="Ziyyat A."/>
            <person name="Arnoult C."/>
            <person name="Dulioust E."/>
            <person name="Bonhivers M."/>
            <person name="Ray P.F."/>
            <person name="Toure A."/>
        </authorList>
    </citation>
    <scope>FUNCTION</scope>
    <scope>SUBCELLULAR LOCATION</scope>
    <scope>TISSUE SPECIFICITY</scope>
    <scope>DISRUPTION PHENOTYPE</scope>
</reference>
<reference key="4">
    <citation type="journal article" date="2019" name="Am. J. Hum. Genet.">
        <title>Bi-allelic Mutations in TTC29 Cause Male Subfertility with Asthenoteratospermia in Humans and Mice.</title>
        <authorList>
            <person name="Liu C."/>
            <person name="He X."/>
            <person name="Liu W."/>
            <person name="Yang S."/>
            <person name="Wang L."/>
            <person name="Li W."/>
            <person name="Wu H."/>
            <person name="Tang S."/>
            <person name="Ni X."/>
            <person name="Wang J."/>
            <person name="Gao Y."/>
            <person name="Tian S."/>
            <person name="Zhang L."/>
            <person name="Cong J."/>
            <person name="Zhang Z."/>
            <person name="Tan Q."/>
            <person name="Zhang J."/>
            <person name="Li H."/>
            <person name="Zhong Y."/>
            <person name="Lv M."/>
            <person name="Li J."/>
            <person name="Jin L."/>
            <person name="Cao Y."/>
            <person name="Zhang F."/>
        </authorList>
    </citation>
    <scope>FUNCTION</scope>
    <scope>SUBCELLULAR LOCATION</scope>
    <scope>TISSUE SPECIFICITY</scope>
    <scope>DISRUPTION PHENOTYPE</scope>
</reference>
<keyword id="KW-0025">Alternative splicing</keyword>
<keyword id="KW-0966">Cell projection</keyword>
<keyword id="KW-0969">Cilium</keyword>
<keyword id="KW-0963">Cytoplasm</keyword>
<keyword id="KW-0206">Cytoskeleton</keyword>
<keyword id="KW-0282">Flagellum</keyword>
<keyword id="KW-1185">Reference proteome</keyword>
<keyword id="KW-0677">Repeat</keyword>
<keyword id="KW-0802">TPR repeat</keyword>
<gene>
    <name type="primary">Ttc29</name>
</gene>
<accession>Q80VM3</accession>
<accession>Q8CF30</accession>
<organism>
    <name type="scientific">Mus musculus</name>
    <name type="common">Mouse</name>
    <dbReference type="NCBI Taxonomy" id="10090"/>
    <lineage>
        <taxon>Eukaryota</taxon>
        <taxon>Metazoa</taxon>
        <taxon>Chordata</taxon>
        <taxon>Craniata</taxon>
        <taxon>Vertebrata</taxon>
        <taxon>Euteleostomi</taxon>
        <taxon>Mammalia</taxon>
        <taxon>Eutheria</taxon>
        <taxon>Euarchontoglires</taxon>
        <taxon>Glires</taxon>
        <taxon>Rodentia</taxon>
        <taxon>Myomorpha</taxon>
        <taxon>Muroidea</taxon>
        <taxon>Muridae</taxon>
        <taxon>Murinae</taxon>
        <taxon>Mus</taxon>
        <taxon>Mus</taxon>
    </lineage>
</organism>
<evidence type="ECO:0000250" key="1">
    <source>
        <dbReference type="UniProtKB" id="Q57ZB2"/>
    </source>
</evidence>
<evidence type="ECO:0000250" key="2">
    <source>
        <dbReference type="UniProtKB" id="Q8NA56"/>
    </source>
</evidence>
<evidence type="ECO:0000255" key="3"/>
<evidence type="ECO:0000256" key="4">
    <source>
        <dbReference type="SAM" id="MobiDB-lite"/>
    </source>
</evidence>
<evidence type="ECO:0000269" key="5">
    <source>
    </source>
</evidence>
<evidence type="ECO:0000269" key="6">
    <source>
    </source>
</evidence>
<evidence type="ECO:0000303" key="7">
    <source>
    </source>
</evidence>
<feature type="chain" id="PRO_0000294437" description="Tetratricopeptide repeat protein 29">
    <location>
        <begin position="1"/>
        <end position="471"/>
    </location>
</feature>
<feature type="repeat" description="TPR 1" evidence="2">
    <location>
        <begin position="92"/>
        <end position="131"/>
    </location>
</feature>
<feature type="repeat" description="TPR 2" evidence="2">
    <location>
        <begin position="136"/>
        <end position="173"/>
    </location>
</feature>
<feature type="repeat" description="TPR 3" evidence="3">
    <location>
        <begin position="182"/>
        <end position="215"/>
    </location>
</feature>
<feature type="repeat" description="TPR 4" evidence="3">
    <location>
        <begin position="234"/>
        <end position="267"/>
    </location>
</feature>
<feature type="repeat" description="TPR 5" evidence="3">
    <location>
        <begin position="274"/>
        <end position="307"/>
    </location>
</feature>
<feature type="repeat" description="TPR 6" evidence="3">
    <location>
        <begin position="314"/>
        <end position="347"/>
    </location>
</feature>
<feature type="repeat" description="TPR 7" evidence="3">
    <location>
        <begin position="354"/>
        <end position="387"/>
    </location>
</feature>
<feature type="region of interest" description="Disordered" evidence="4">
    <location>
        <begin position="449"/>
        <end position="471"/>
    </location>
</feature>
<feature type="splice variant" id="VSP_026639" description="In isoform 2." evidence="7">
    <location>
        <begin position="60"/>
        <end position="471"/>
    </location>
</feature>
<protein>
    <recommendedName>
        <fullName>Tetratricopeptide repeat protein 29</fullName>
        <shortName>TPR repeat protein 29</shortName>
    </recommendedName>
</protein>
<name>TTC29_MOUSE</name>
<proteinExistence type="evidence at protein level"/>
<sequence length="471" mass="54282">MATFPPLPMTHTRLAILARQKLPCSSKKIPRAQLIKEKEDIDYYLEQNFKGLSKEEVAAHRNSYKKSICVDMLRDGFHKSFTELFALMEQWDKLPEAAKAQSLFWQQRPLEDQPDKLDNFYHYLTRAEAAERKGYYEEVYNNLYALACYFDNSEDKWVRNHFYERCFNIAQLIKADGGKKEAEAESHMGLLFEEEGELLKAAEHYEAFHELTHGRLWKDGTGQLLNLVACESLVRTYRLLSDRMLENKDYKQAIKILIKASEIAREGNDRSMEGEASYYLGLAHLASGEYETALTVLNRYSEISTSLDDDHGLGRAYEAIAKALQSQGETTEAINYLEKFVTIARNNLQSLDMIRACTMLGDIYNEKGQYSKASEYFQQAFSTAMELMKTALMDETKVHYGIARAHQMMLAMKGYIESADSNGLNCLLSWKETRTQIEYDPILGESRRATEDNIYQLPDAEEETRRSPENQ</sequence>